<name>Y1689_LYSSC</name>
<organism>
    <name type="scientific">Lysinibacillus sphaericus (strain C3-41)</name>
    <dbReference type="NCBI Taxonomy" id="444177"/>
    <lineage>
        <taxon>Bacteria</taxon>
        <taxon>Bacillati</taxon>
        <taxon>Bacillota</taxon>
        <taxon>Bacilli</taxon>
        <taxon>Bacillales</taxon>
        <taxon>Bacillaceae</taxon>
        <taxon>Lysinibacillus</taxon>
    </lineage>
</organism>
<proteinExistence type="inferred from homology"/>
<evidence type="ECO:0000255" key="1">
    <source>
        <dbReference type="HAMAP-Rule" id="MF_01103"/>
    </source>
</evidence>
<keyword id="KW-0963">Cytoplasm</keyword>
<gene>
    <name type="ordered locus">Bsph_1689</name>
</gene>
<dbReference type="EMBL" id="CP000817">
    <property type="protein sequence ID" value="ACA39285.1"/>
    <property type="molecule type" value="Genomic_DNA"/>
</dbReference>
<dbReference type="RefSeq" id="WP_012293388.1">
    <property type="nucleotide sequence ID" value="NC_010382.1"/>
</dbReference>
<dbReference type="SMR" id="B1HRK0"/>
<dbReference type="EnsemblBacteria" id="ACA39285">
    <property type="protein sequence ID" value="ACA39285"/>
    <property type="gene ID" value="Bsph_1689"/>
</dbReference>
<dbReference type="KEGG" id="lsp:Bsph_1689"/>
<dbReference type="HOGENOM" id="CLU_173137_0_2_9"/>
<dbReference type="Proteomes" id="UP000002164">
    <property type="component" value="Chromosome"/>
</dbReference>
<dbReference type="GO" id="GO:0005737">
    <property type="term" value="C:cytoplasm"/>
    <property type="evidence" value="ECO:0007669"/>
    <property type="project" value="UniProtKB-SubCell"/>
</dbReference>
<dbReference type="Gene3D" id="1.10.287.540">
    <property type="entry name" value="Helix hairpin bin"/>
    <property type="match status" value="1"/>
</dbReference>
<dbReference type="HAMAP" id="MF_01103">
    <property type="entry name" value="UPF0291"/>
    <property type="match status" value="1"/>
</dbReference>
<dbReference type="InterPro" id="IPR009242">
    <property type="entry name" value="DUF896"/>
</dbReference>
<dbReference type="PANTHER" id="PTHR37300">
    <property type="entry name" value="UPF0291 PROTEIN CBO2609/CLC_2481"/>
    <property type="match status" value="1"/>
</dbReference>
<dbReference type="PANTHER" id="PTHR37300:SF1">
    <property type="entry name" value="UPF0291 PROTEIN YNZC"/>
    <property type="match status" value="1"/>
</dbReference>
<dbReference type="Pfam" id="PF05979">
    <property type="entry name" value="DUF896"/>
    <property type="match status" value="1"/>
</dbReference>
<dbReference type="SUPFAM" id="SSF158221">
    <property type="entry name" value="YnzC-like"/>
    <property type="match status" value="1"/>
</dbReference>
<accession>B1HRK0</accession>
<feature type="chain" id="PRO_1000137013" description="UPF0291 protein Bsph_1689">
    <location>
        <begin position="1"/>
        <end position="77"/>
    </location>
</feature>
<comment type="subcellular location">
    <subcellularLocation>
        <location evidence="1">Cytoplasm</location>
    </subcellularLocation>
</comment>
<comment type="similarity">
    <text evidence="1">Belongs to the UPF0291 family.</text>
</comment>
<reference key="1">
    <citation type="journal article" date="2008" name="J. Bacteriol.">
        <title>Complete genome sequence of the mosquitocidal bacterium Bacillus sphaericus C3-41 and comparison with those of closely related Bacillus species.</title>
        <authorList>
            <person name="Hu X."/>
            <person name="Fan W."/>
            <person name="Han B."/>
            <person name="Liu H."/>
            <person name="Zheng D."/>
            <person name="Li Q."/>
            <person name="Dong W."/>
            <person name="Yan J."/>
            <person name="Gao M."/>
            <person name="Berry C."/>
            <person name="Yuan Z."/>
        </authorList>
    </citation>
    <scope>NUCLEOTIDE SEQUENCE [LARGE SCALE GENOMIC DNA]</scope>
    <source>
        <strain>C3-41</strain>
    </source>
</reference>
<sequence length="77" mass="8881">MLSKEKINRINELSAKAKNGQLTDEEAKERTALRKEYLDTFRATMRDTIENVKVVDAEGNDVTPEKVRQAKKNKFLN</sequence>
<protein>
    <recommendedName>
        <fullName evidence="1">UPF0291 protein Bsph_1689</fullName>
    </recommendedName>
</protein>